<protein>
    <recommendedName>
        <fullName>ATP-dependent kinase YFH7</fullName>
        <ecNumber>2.7.1.-</ecNumber>
    </recommendedName>
    <alternativeName>
        <fullName>Altered inheritance of mitochondria protein 12</fullName>
    </alternativeName>
</protein>
<evidence type="ECO:0000250" key="1"/>
<evidence type="ECO:0000305" key="2"/>
<proteinExistence type="inferred from homology"/>
<comment type="function">
    <text evidence="1">ATP-dependent kinase that could be involved in endoplasmic reticulum membrane assembly.</text>
</comment>
<comment type="similarity">
    <text evidence="2">Belongs to the YFH7 family.</text>
</comment>
<keyword id="KW-0067">ATP-binding</keyword>
<keyword id="KW-0418">Kinase</keyword>
<keyword id="KW-0547">Nucleotide-binding</keyword>
<keyword id="KW-0808">Transferase</keyword>
<sequence>MVDTHKLADDVLHLLDNRIEDNYRVCVILVGSPGSGKSTIAEELCQIINEKYHTFLSEHPNVIEVNDRLKPMVNLVDSLKTLQPNEVAEMIENQGLFKDHVEDVNFQPIKYSALTSNNEECTAVVARGGTANAIRIATVDNPVNVNKLAQDSINIAQIVPMDGFHLSRRCLDLFKDPQTAHKRRGSPSTFDSNNFLQLCKILAKTSLCKVSSHHKFYSTSSVFEKLSKTFSQTIPDIFVPGFNHALKDPTPDQYCISKFTRIVILEGLYLLYDQENWKKIYKTLADTGALLVYKIDIDYEATEERVAKRHLQSGLVTTIAEGREKFRSNDLLNGRDIDNHLIKVDNIVHIRND</sequence>
<dbReference type="EC" id="2.7.1.-"/>
<dbReference type="EMBL" id="FN393068">
    <property type="protein sequence ID" value="CAY79456.1"/>
    <property type="molecule type" value="Genomic_DNA"/>
</dbReference>
<dbReference type="SMR" id="C8Z7U0"/>
<dbReference type="HOGENOM" id="CLU_067202_1_0_1"/>
<dbReference type="OrthoDB" id="9941at4893"/>
<dbReference type="Proteomes" id="UP000000286">
    <property type="component" value="Chromosome VI, Scaffold EC1118_1F14"/>
</dbReference>
<dbReference type="GO" id="GO:0005524">
    <property type="term" value="F:ATP binding"/>
    <property type="evidence" value="ECO:0007669"/>
    <property type="project" value="UniProtKB-KW"/>
</dbReference>
<dbReference type="GO" id="GO:0016301">
    <property type="term" value="F:kinase activity"/>
    <property type="evidence" value="ECO:0007669"/>
    <property type="project" value="UniProtKB-KW"/>
</dbReference>
<dbReference type="CDD" id="cd00009">
    <property type="entry name" value="AAA"/>
    <property type="match status" value="1"/>
</dbReference>
<dbReference type="FunFam" id="3.40.50.300:FF:002630">
    <property type="entry name" value="ATP-dependent kinase YFH7"/>
    <property type="match status" value="1"/>
</dbReference>
<dbReference type="Gene3D" id="3.40.50.300">
    <property type="entry name" value="P-loop containing nucleotide triphosphate hydrolases"/>
    <property type="match status" value="1"/>
</dbReference>
<dbReference type="InterPro" id="IPR027417">
    <property type="entry name" value="P-loop_NTPase"/>
</dbReference>
<dbReference type="PANTHER" id="PTHR10285">
    <property type="entry name" value="URIDINE KINASE"/>
    <property type="match status" value="1"/>
</dbReference>
<dbReference type="SUPFAM" id="SSF52540">
    <property type="entry name" value="P-loop containing nucleoside triphosphate hydrolases"/>
    <property type="match status" value="2"/>
</dbReference>
<gene>
    <name type="primary">YFH7</name>
    <name type="synonym">AIM12</name>
    <name type="ORF">EC1118_1F14_0969g</name>
</gene>
<feature type="chain" id="PRO_0000404218" description="ATP-dependent kinase YFH7">
    <location>
        <begin position="1"/>
        <end position="353"/>
    </location>
</feature>
<feature type="binding site" evidence="1">
    <location>
        <begin position="31"/>
        <end position="39"/>
    </location>
    <ligand>
        <name>ATP</name>
        <dbReference type="ChEBI" id="CHEBI:30616"/>
    </ligand>
</feature>
<name>YFH7_YEAS8</name>
<reference key="1">
    <citation type="journal article" date="2009" name="Proc. Natl. Acad. Sci. U.S.A.">
        <title>Eukaryote-to-eukaryote gene transfer events revealed by the genome sequence of the wine yeast Saccharomyces cerevisiae EC1118.</title>
        <authorList>
            <person name="Novo M."/>
            <person name="Bigey F."/>
            <person name="Beyne E."/>
            <person name="Galeote V."/>
            <person name="Gavory F."/>
            <person name="Mallet S."/>
            <person name="Cambon B."/>
            <person name="Legras J.-L."/>
            <person name="Wincker P."/>
            <person name="Casaregola S."/>
            <person name="Dequin S."/>
        </authorList>
    </citation>
    <scope>NUCLEOTIDE SEQUENCE [LARGE SCALE GENOMIC DNA]</scope>
    <source>
        <strain>Lalvin EC1118 / Prise de mousse</strain>
    </source>
</reference>
<organism>
    <name type="scientific">Saccharomyces cerevisiae (strain Lalvin EC1118 / Prise de mousse)</name>
    <name type="common">Baker's yeast</name>
    <dbReference type="NCBI Taxonomy" id="643680"/>
    <lineage>
        <taxon>Eukaryota</taxon>
        <taxon>Fungi</taxon>
        <taxon>Dikarya</taxon>
        <taxon>Ascomycota</taxon>
        <taxon>Saccharomycotina</taxon>
        <taxon>Saccharomycetes</taxon>
        <taxon>Saccharomycetales</taxon>
        <taxon>Saccharomycetaceae</taxon>
        <taxon>Saccharomyces</taxon>
    </lineage>
</organism>
<accession>C8Z7U0</accession>